<evidence type="ECO:0000250" key="1"/>
<evidence type="ECO:0000255" key="2">
    <source>
        <dbReference type="PROSITE-ProRule" id="PRU00156"/>
    </source>
</evidence>
<evidence type="ECO:0000256" key="3">
    <source>
        <dbReference type="SAM" id="MobiDB-lite"/>
    </source>
</evidence>
<evidence type="ECO:0000305" key="4"/>
<gene>
    <name type="primary">Cyp40</name>
</gene>
<organism>
    <name type="scientific">Amanita muscaria</name>
    <name type="common">Fly agaric</name>
    <name type="synonym">Agaricus muscarius</name>
    <dbReference type="NCBI Taxonomy" id="41956"/>
    <lineage>
        <taxon>Eukaryota</taxon>
        <taxon>Fungi</taxon>
        <taxon>Dikarya</taxon>
        <taxon>Basidiomycota</taxon>
        <taxon>Agaricomycotina</taxon>
        <taxon>Agaricomycetes</taxon>
        <taxon>Agaricomycetidae</taxon>
        <taxon>Agaricales</taxon>
        <taxon>Pluteineae</taxon>
        <taxon>Amanitaceae</taxon>
        <taxon>Amanita</taxon>
    </lineage>
</organism>
<dbReference type="EC" id="5.2.1.8"/>
<dbReference type="EMBL" id="AY773481">
    <property type="protein sequence ID" value="AAV40687.1"/>
    <property type="molecule type" value="mRNA"/>
</dbReference>
<dbReference type="SMR" id="Q5U8Z7"/>
<dbReference type="GO" id="GO:0005737">
    <property type="term" value="C:cytoplasm"/>
    <property type="evidence" value="ECO:0007669"/>
    <property type="project" value="UniProtKB-SubCell"/>
</dbReference>
<dbReference type="GO" id="GO:0043231">
    <property type="term" value="C:intracellular membrane-bounded organelle"/>
    <property type="evidence" value="ECO:0007669"/>
    <property type="project" value="TreeGrafter"/>
</dbReference>
<dbReference type="GO" id="GO:0016018">
    <property type="term" value="F:cyclosporin A binding"/>
    <property type="evidence" value="ECO:0007669"/>
    <property type="project" value="TreeGrafter"/>
</dbReference>
<dbReference type="GO" id="GO:0003755">
    <property type="term" value="F:peptidyl-prolyl cis-trans isomerase activity"/>
    <property type="evidence" value="ECO:0007669"/>
    <property type="project" value="UniProtKB-KW"/>
</dbReference>
<dbReference type="GO" id="GO:0006457">
    <property type="term" value="P:protein folding"/>
    <property type="evidence" value="ECO:0007669"/>
    <property type="project" value="InterPro"/>
</dbReference>
<dbReference type="CDD" id="cd01926">
    <property type="entry name" value="cyclophilin_ABH_like"/>
    <property type="match status" value="1"/>
</dbReference>
<dbReference type="FunFam" id="2.40.100.10:FF:000022">
    <property type="entry name" value="Peptidyl-prolyl cis-trans isomerase CYP95"/>
    <property type="match status" value="1"/>
</dbReference>
<dbReference type="FunFam" id="1.25.40.10:FF:000029">
    <property type="entry name" value="peptidyl-prolyl cis-trans isomerase D"/>
    <property type="match status" value="1"/>
</dbReference>
<dbReference type="Gene3D" id="2.40.100.10">
    <property type="entry name" value="Cyclophilin-like"/>
    <property type="match status" value="1"/>
</dbReference>
<dbReference type="Gene3D" id="1.25.40.10">
    <property type="entry name" value="Tetratricopeptide repeat domain"/>
    <property type="match status" value="1"/>
</dbReference>
<dbReference type="InterPro" id="IPR029000">
    <property type="entry name" value="Cyclophilin-like_dom_sf"/>
</dbReference>
<dbReference type="InterPro" id="IPR020892">
    <property type="entry name" value="Cyclophilin-type_PPIase_CS"/>
</dbReference>
<dbReference type="InterPro" id="IPR002130">
    <property type="entry name" value="Cyclophilin-type_PPIase_dom"/>
</dbReference>
<dbReference type="InterPro" id="IPR011990">
    <property type="entry name" value="TPR-like_helical_dom_sf"/>
</dbReference>
<dbReference type="PANTHER" id="PTHR11071">
    <property type="entry name" value="PEPTIDYL-PROLYL CIS-TRANS ISOMERASE"/>
    <property type="match status" value="1"/>
</dbReference>
<dbReference type="PANTHER" id="PTHR11071:SF561">
    <property type="entry name" value="PEPTIDYL-PROLYL CIS-TRANS ISOMERASE D-RELATED"/>
    <property type="match status" value="1"/>
</dbReference>
<dbReference type="Pfam" id="PF00160">
    <property type="entry name" value="Pro_isomerase"/>
    <property type="match status" value="1"/>
</dbReference>
<dbReference type="PRINTS" id="PR00153">
    <property type="entry name" value="CSAPPISMRASE"/>
</dbReference>
<dbReference type="SUPFAM" id="SSF50891">
    <property type="entry name" value="Cyclophilin-like"/>
    <property type="match status" value="1"/>
</dbReference>
<dbReference type="SUPFAM" id="SSF48452">
    <property type="entry name" value="TPR-like"/>
    <property type="match status" value="1"/>
</dbReference>
<dbReference type="PROSITE" id="PS00170">
    <property type="entry name" value="CSA_PPIASE_1"/>
    <property type="match status" value="1"/>
</dbReference>
<dbReference type="PROSITE" id="PS50072">
    <property type="entry name" value="CSA_PPIASE_2"/>
    <property type="match status" value="1"/>
</dbReference>
<name>PPID_AMAMU</name>
<sequence length="371" mass="40735">MDDRPIVFFDIAIGGQLAGRVAFRLYSDLVPKTAENFRALCTGEKGLGQSGKPLWYKGSAFHRVIKGFMCQGGDFTAGNGTGGESIYGEKFEDEGFPVHHSRPFLLSMANAGPNTNGSQFFITVSATPHLDGKHVVFGEVIKGRSVVRTIENNPATNGDVPKEPVVIADCGQLSSDDPFLAERTSTDGDPYEDYPDDEDQELGNPETVLQIAKTIREVANRLYKQGDISGALQKYSKSIRYLDVHQELPENSPPDLNEQYKSLLAPLLLNSALAAIRIEPHSAANAMNAVANTSRALNRLELSNADKAKAYYRRGLAKTIMRDEVGAEQDLKTANELLPEDGAIAAELAKIIQKKKEQREREKKAYKKMFA</sequence>
<feature type="chain" id="PRO_0000232940" description="Peptidyl-prolyl cis-trans isomerase D">
    <location>
        <begin position="1"/>
        <end position="371"/>
    </location>
</feature>
<feature type="domain" description="PPIase cyclophilin-type" evidence="2">
    <location>
        <begin position="8"/>
        <end position="172"/>
    </location>
</feature>
<feature type="repeat" description="TPR 1">
    <location>
        <begin position="212"/>
        <end position="245"/>
    </location>
</feature>
<feature type="repeat" description="TPR 2">
    <location>
        <begin position="265"/>
        <end position="303"/>
    </location>
</feature>
<feature type="repeat" description="TPR 3">
    <location>
        <begin position="308"/>
        <end position="341"/>
    </location>
</feature>
<feature type="region of interest" description="Disordered" evidence="3">
    <location>
        <begin position="175"/>
        <end position="202"/>
    </location>
</feature>
<feature type="compositionally biased region" description="Acidic residues" evidence="3">
    <location>
        <begin position="189"/>
        <end position="201"/>
    </location>
</feature>
<proteinExistence type="evidence at transcript level"/>
<protein>
    <recommendedName>
        <fullName>Peptidyl-prolyl cis-trans isomerase D</fullName>
        <shortName>PPIase D</shortName>
        <ecNumber>5.2.1.8</ecNumber>
    </recommendedName>
    <alternativeName>
        <fullName>Rotamase D</fullName>
    </alternativeName>
</protein>
<keyword id="KW-0963">Cytoplasm</keyword>
<keyword id="KW-0413">Isomerase</keyword>
<keyword id="KW-0677">Repeat</keyword>
<keyword id="KW-0697">Rotamase</keyword>
<keyword id="KW-0802">TPR repeat</keyword>
<reference key="1">
    <citation type="journal article" date="2005" name="New Phytol.">
        <title>Mycorrhiza helper bacterium Streptomyces AcH 505 induces differential gene expression in the ectomycorrhizal fungus Amanita muscaria.</title>
        <authorList>
            <person name="Schrey S.D."/>
            <person name="Schellhammer M."/>
            <person name="Ecke M."/>
            <person name="Hampp R."/>
            <person name="Tarkka M.T."/>
        </authorList>
    </citation>
    <scope>NUCLEOTIDE SEQUENCE [MRNA]</scope>
</reference>
<comment type="function">
    <text evidence="1">PPIases accelerate the folding of proteins. It catalyzes the cis-trans isomerization of proline imidic peptide bonds in oligopeptides (By similarity).</text>
</comment>
<comment type="catalytic activity">
    <reaction>
        <text>[protein]-peptidylproline (omega=180) = [protein]-peptidylproline (omega=0)</text>
        <dbReference type="Rhea" id="RHEA:16237"/>
        <dbReference type="Rhea" id="RHEA-COMP:10747"/>
        <dbReference type="Rhea" id="RHEA-COMP:10748"/>
        <dbReference type="ChEBI" id="CHEBI:83833"/>
        <dbReference type="ChEBI" id="CHEBI:83834"/>
        <dbReference type="EC" id="5.2.1.8"/>
    </reaction>
</comment>
<comment type="subcellular location">
    <subcellularLocation>
        <location evidence="1">Cytoplasm</location>
    </subcellularLocation>
</comment>
<comment type="similarity">
    <text evidence="4">Belongs to the cyclophilin-type PPIase family. PPIase D subfamily.</text>
</comment>
<accession>Q5U8Z7</accession>